<protein>
    <recommendedName>
        <fullName evidence="8">ATP-dependent Clp protease proteolytic subunit-related protein 4, chloroplastic</fullName>
        <shortName evidence="8">ClpR4</shortName>
    </recommendedName>
    <alternativeName>
        <fullName evidence="9">Protein HAPPY ON NORFLURAZON 5</fullName>
    </alternativeName>
</protein>
<accession>Q8LB10</accession>
<accession>O23548</accession>
<accession>Q8RXG1</accession>
<evidence type="ECO:0000255" key="1"/>
<evidence type="ECO:0000269" key="2">
    <source>
    </source>
</evidence>
<evidence type="ECO:0000269" key="3">
    <source>
    </source>
</evidence>
<evidence type="ECO:0000269" key="4">
    <source>
    </source>
</evidence>
<evidence type="ECO:0000269" key="5">
    <source>
    </source>
</evidence>
<evidence type="ECO:0000269" key="6">
    <source>
    </source>
</evidence>
<evidence type="ECO:0000269" key="7">
    <source>
    </source>
</evidence>
<evidence type="ECO:0000303" key="8">
    <source>
    </source>
</evidence>
<evidence type="ECO:0000303" key="9">
    <source>
    </source>
</evidence>
<evidence type="ECO:0000303" key="10">
    <source ref="9"/>
</evidence>
<evidence type="ECO:0000305" key="11"/>
<evidence type="ECO:0000312" key="12">
    <source>
        <dbReference type="Araport" id="AT4G17040"/>
    </source>
</evidence>
<evidence type="ECO:0000312" key="13">
    <source>
        <dbReference type="EMBL" id="CAB10484.1"/>
    </source>
</evidence>
<evidence type="ECO:0000312" key="14">
    <source>
        <dbReference type="EMBL" id="CAB80975.1"/>
    </source>
</evidence>
<comment type="function">
    <text evidence="6">Involved in plastid protein homeostasis.</text>
</comment>
<comment type="subunit">
    <text evidence="2 3 4 7">Component of the chloroplastic Clp protease core complex which consist of at least 16 proteins: CLPP4 (3 copies), CLPP5 (3 copies), CLPR4 (2 copies), ClpP1 (1 copy), CLPP6 (1 copy), CLPR2 (1 copy), CLPT1 (1 copy), CLPT2 (1 copy) and 3 copies of CLPP3 and/or CLPR1 and/or CLPR3 (PubMed:14593120, PubMed:16766689, PubMed:16980539). The core complex is organized in two heptameric rings, one containing CLPP3,4,5,6 in a 1:2:3:1 ratio and the other CLPP1 and CLPR1,2,3,4 in a 3:1:1:1:1 ratio (PubMed:21712416).</text>
</comment>
<comment type="subcellular location">
    <subcellularLocation>
        <location evidence="2">Plastid</location>
        <location evidence="2">Chloroplast</location>
    </subcellularLocation>
</comment>
<comment type="disruption phenotype">
    <text evidence="5 10">Embryo lethal (Ref.9). Delayed embryogenesis and albino embryos, with seedling development blocked in the cotyledon stage (PubMed:19525416). Under heterotrophic growth conditions, seedlings develop into small albino to virescent seedlings (PubMed:19525416).</text>
</comment>
<comment type="similarity">
    <text evidence="11">Belongs to the peptidase S14 family.</text>
</comment>
<comment type="sequence caution" evidence="11">
    <conflict type="erroneous gene model prediction">
        <sequence resource="EMBL-CDS" id="CAB10484"/>
    </conflict>
</comment>
<comment type="sequence caution" evidence="11">
    <conflict type="erroneous gene model prediction">
        <sequence resource="EMBL-CDS" id="CAB80975"/>
    </conflict>
</comment>
<proteinExistence type="evidence at protein level"/>
<feature type="transit peptide" description="Chloroplast" evidence="1">
    <location>
        <begin position="1"/>
        <end position="68"/>
    </location>
</feature>
<feature type="chain" id="PRO_0000308985" description="ATP-dependent Clp protease proteolytic subunit-related protein 4, chloroplastic">
    <location>
        <begin position="69"/>
        <end position="305"/>
    </location>
</feature>
<feature type="sequence conflict" description="In Ref. 5; AAL91164/AAN15369." evidence="11" ref="5">
    <original>E</original>
    <variation>K</variation>
    <location>
        <position position="143"/>
    </location>
</feature>
<gene>
    <name evidence="8" type="primary">CLPR4</name>
    <name evidence="9" type="synonym">HON5</name>
    <name evidence="12" type="ordered locus">At4g17040</name>
    <name evidence="13" type="ORF">dl4550c</name>
    <name evidence="14" type="ORF">FCAALL.413</name>
</gene>
<dbReference type="EMBL" id="Z97342">
    <property type="protein sequence ID" value="CAB10484.1"/>
    <property type="status" value="ALT_SEQ"/>
    <property type="molecule type" value="Genomic_DNA"/>
</dbReference>
<dbReference type="EMBL" id="AL161545">
    <property type="protein sequence ID" value="CAB80975.1"/>
    <property type="status" value="ALT_SEQ"/>
    <property type="molecule type" value="Genomic_DNA"/>
</dbReference>
<dbReference type="EMBL" id="CP002687">
    <property type="protein sequence ID" value="AEE83842.1"/>
    <property type="molecule type" value="Genomic_DNA"/>
</dbReference>
<dbReference type="EMBL" id="AK117499">
    <property type="protein sequence ID" value="BAC42162.1"/>
    <property type="molecule type" value="mRNA"/>
</dbReference>
<dbReference type="EMBL" id="AY081275">
    <property type="protein sequence ID" value="AAL91164.1"/>
    <property type="molecule type" value="mRNA"/>
</dbReference>
<dbReference type="EMBL" id="BT000050">
    <property type="protein sequence ID" value="AAN15369.1"/>
    <property type="molecule type" value="mRNA"/>
</dbReference>
<dbReference type="EMBL" id="AY087492">
    <property type="protein sequence ID" value="AAM65035.1"/>
    <property type="molecule type" value="mRNA"/>
</dbReference>
<dbReference type="PIR" id="G71438">
    <property type="entry name" value="G71438"/>
</dbReference>
<dbReference type="RefSeq" id="NP_567521.1">
    <property type="nucleotide sequence ID" value="NM_117808.3"/>
</dbReference>
<dbReference type="SMR" id="Q8LB10"/>
<dbReference type="BioGRID" id="12705">
    <property type="interactions" value="6"/>
</dbReference>
<dbReference type="FunCoup" id="Q8LB10">
    <property type="interactions" value="1823"/>
</dbReference>
<dbReference type="IntAct" id="Q8LB10">
    <property type="interactions" value="3"/>
</dbReference>
<dbReference type="STRING" id="3702.Q8LB10"/>
<dbReference type="MEROPS" id="S14.001"/>
<dbReference type="PaxDb" id="3702-AT4G17040.1"/>
<dbReference type="ProteomicsDB" id="241042"/>
<dbReference type="EnsemblPlants" id="AT4G17040.1">
    <property type="protein sequence ID" value="AT4G17040.1"/>
    <property type="gene ID" value="AT4G17040"/>
</dbReference>
<dbReference type="GeneID" id="827412"/>
<dbReference type="Gramene" id="AT4G17040.1">
    <property type="protein sequence ID" value="AT4G17040.1"/>
    <property type="gene ID" value="AT4G17040"/>
</dbReference>
<dbReference type="KEGG" id="ath:AT4G17040"/>
<dbReference type="Araport" id="AT4G17040"/>
<dbReference type="TAIR" id="AT4G17040">
    <property type="gene designation" value="CLPR4"/>
</dbReference>
<dbReference type="eggNOG" id="KOG0840">
    <property type="taxonomic scope" value="Eukaryota"/>
</dbReference>
<dbReference type="HOGENOM" id="CLU_058707_5_1_1"/>
<dbReference type="InParanoid" id="Q8LB10"/>
<dbReference type="OMA" id="ICDTINY"/>
<dbReference type="OrthoDB" id="2017408at2759"/>
<dbReference type="PhylomeDB" id="Q8LB10"/>
<dbReference type="PRO" id="PR:Q8LB10"/>
<dbReference type="Proteomes" id="UP000006548">
    <property type="component" value="Chromosome 4"/>
</dbReference>
<dbReference type="ExpressionAtlas" id="Q8LB10">
    <property type="expression patterns" value="baseline and differential"/>
</dbReference>
<dbReference type="GO" id="GO:0009507">
    <property type="term" value="C:chloroplast"/>
    <property type="evidence" value="ECO:0007005"/>
    <property type="project" value="TAIR"/>
</dbReference>
<dbReference type="GO" id="GO:0009941">
    <property type="term" value="C:chloroplast envelope"/>
    <property type="evidence" value="ECO:0007005"/>
    <property type="project" value="TAIR"/>
</dbReference>
<dbReference type="GO" id="GO:0009570">
    <property type="term" value="C:chloroplast stroma"/>
    <property type="evidence" value="ECO:0007005"/>
    <property type="project" value="TAIR"/>
</dbReference>
<dbReference type="GO" id="GO:0005829">
    <property type="term" value="C:cytosol"/>
    <property type="evidence" value="ECO:0007005"/>
    <property type="project" value="TAIR"/>
</dbReference>
<dbReference type="GO" id="GO:0009536">
    <property type="term" value="C:plastid"/>
    <property type="evidence" value="ECO:0007005"/>
    <property type="project" value="TAIR"/>
</dbReference>
<dbReference type="GO" id="GO:0009532">
    <property type="term" value="C:plastid stroma"/>
    <property type="evidence" value="ECO:0000314"/>
    <property type="project" value="TAIR"/>
</dbReference>
<dbReference type="GO" id="GO:0004176">
    <property type="term" value="F:ATP-dependent peptidase activity"/>
    <property type="evidence" value="ECO:0007669"/>
    <property type="project" value="InterPro"/>
</dbReference>
<dbReference type="GO" id="GO:0004252">
    <property type="term" value="F:serine-type endopeptidase activity"/>
    <property type="evidence" value="ECO:0007669"/>
    <property type="project" value="InterPro"/>
</dbReference>
<dbReference type="GO" id="GO:0006508">
    <property type="term" value="P:proteolysis"/>
    <property type="evidence" value="ECO:0007669"/>
    <property type="project" value="InterPro"/>
</dbReference>
<dbReference type="GO" id="GO:0010468">
    <property type="term" value="P:regulation of gene expression"/>
    <property type="evidence" value="ECO:0000315"/>
    <property type="project" value="TAIR"/>
</dbReference>
<dbReference type="GO" id="GO:0000302">
    <property type="term" value="P:response to reactive oxygen species"/>
    <property type="evidence" value="ECO:0000315"/>
    <property type="project" value="TAIR"/>
</dbReference>
<dbReference type="CDD" id="cd07017">
    <property type="entry name" value="S14_ClpP_2"/>
    <property type="match status" value="1"/>
</dbReference>
<dbReference type="FunFam" id="3.90.226.10:FF:000020">
    <property type="entry name" value="ATP-dependent Clp protease proteolytic subunit"/>
    <property type="match status" value="1"/>
</dbReference>
<dbReference type="Gene3D" id="3.90.226.10">
    <property type="entry name" value="2-enoyl-CoA Hydratase, Chain A, domain 1"/>
    <property type="match status" value="1"/>
</dbReference>
<dbReference type="InterPro" id="IPR001907">
    <property type="entry name" value="ClpP"/>
</dbReference>
<dbReference type="InterPro" id="IPR029045">
    <property type="entry name" value="ClpP/crotonase-like_dom_sf"/>
</dbReference>
<dbReference type="InterPro" id="IPR023562">
    <property type="entry name" value="ClpP/TepA"/>
</dbReference>
<dbReference type="PANTHER" id="PTHR10381">
    <property type="entry name" value="ATP-DEPENDENT CLP PROTEASE PROTEOLYTIC SUBUNIT"/>
    <property type="match status" value="1"/>
</dbReference>
<dbReference type="PANTHER" id="PTHR10381:SF47">
    <property type="entry name" value="ATP-DEPENDENT CLP PROTEASE PROTEOLYTIC SUBUNIT-RELATED PROTEIN 4, CHLOROPLASTIC"/>
    <property type="match status" value="1"/>
</dbReference>
<dbReference type="Pfam" id="PF00574">
    <property type="entry name" value="CLP_protease"/>
    <property type="match status" value="1"/>
</dbReference>
<dbReference type="PRINTS" id="PR00127">
    <property type="entry name" value="CLPPROTEASEP"/>
</dbReference>
<dbReference type="SUPFAM" id="SSF52096">
    <property type="entry name" value="ClpP/crotonase"/>
    <property type="match status" value="1"/>
</dbReference>
<keyword id="KW-0150">Chloroplast</keyword>
<keyword id="KW-0934">Plastid</keyword>
<keyword id="KW-1185">Reference proteome</keyword>
<keyword id="KW-0809">Transit peptide</keyword>
<reference key="1">
    <citation type="journal article" date="1998" name="Nature">
        <title>Analysis of 1.9 Mb of contiguous sequence from chromosome 4 of Arabidopsis thaliana.</title>
        <authorList>
            <person name="Bevan M."/>
            <person name="Bancroft I."/>
            <person name="Bent E."/>
            <person name="Love K."/>
            <person name="Goodman H.M."/>
            <person name="Dean C."/>
            <person name="Bergkamp R."/>
            <person name="Dirkse W."/>
            <person name="van Staveren M."/>
            <person name="Stiekema W."/>
            <person name="Drost L."/>
            <person name="Ridley P."/>
            <person name="Hudson S.-A."/>
            <person name="Patel K."/>
            <person name="Murphy G."/>
            <person name="Piffanelli P."/>
            <person name="Wedler H."/>
            <person name="Wedler E."/>
            <person name="Wambutt R."/>
            <person name="Weitzenegger T."/>
            <person name="Pohl T."/>
            <person name="Terryn N."/>
            <person name="Gielen J."/>
            <person name="Villarroel R."/>
            <person name="De Clercq R."/>
            <person name="van Montagu M."/>
            <person name="Lecharny A."/>
            <person name="Aubourg S."/>
            <person name="Gy I."/>
            <person name="Kreis M."/>
            <person name="Lao N."/>
            <person name="Kavanagh T."/>
            <person name="Hempel S."/>
            <person name="Kotter P."/>
            <person name="Entian K.-D."/>
            <person name="Rieger M."/>
            <person name="Schaefer M."/>
            <person name="Funk B."/>
            <person name="Mueller-Auer S."/>
            <person name="Silvey M."/>
            <person name="James R."/>
            <person name="Monfort A."/>
            <person name="Pons A."/>
            <person name="Puigdomenech P."/>
            <person name="Douka A."/>
            <person name="Voukelatou E."/>
            <person name="Milioni D."/>
            <person name="Hatzopoulos P."/>
            <person name="Piravandi E."/>
            <person name="Obermaier B."/>
            <person name="Hilbert H."/>
            <person name="Duesterhoeft A."/>
            <person name="Moores T."/>
            <person name="Jones J.D.G."/>
            <person name="Eneva T."/>
            <person name="Palme K."/>
            <person name="Benes V."/>
            <person name="Rechmann S."/>
            <person name="Ansorge W."/>
            <person name="Cooke R."/>
            <person name="Berger C."/>
            <person name="Delseny M."/>
            <person name="Voet M."/>
            <person name="Volckaert G."/>
            <person name="Mewes H.-W."/>
            <person name="Klosterman S."/>
            <person name="Schueller C."/>
            <person name="Chalwatzis N."/>
        </authorList>
    </citation>
    <scope>NUCLEOTIDE SEQUENCE [LARGE SCALE GENOMIC DNA]</scope>
    <source>
        <strain>cv. Columbia</strain>
    </source>
</reference>
<reference key="2">
    <citation type="journal article" date="1999" name="Nature">
        <title>Sequence and analysis of chromosome 4 of the plant Arabidopsis thaliana.</title>
        <authorList>
            <person name="Mayer K.F.X."/>
            <person name="Schueller C."/>
            <person name="Wambutt R."/>
            <person name="Murphy G."/>
            <person name="Volckaert G."/>
            <person name="Pohl T."/>
            <person name="Duesterhoeft A."/>
            <person name="Stiekema W."/>
            <person name="Entian K.-D."/>
            <person name="Terryn N."/>
            <person name="Harris B."/>
            <person name="Ansorge W."/>
            <person name="Brandt P."/>
            <person name="Grivell L.A."/>
            <person name="Rieger M."/>
            <person name="Weichselgartner M."/>
            <person name="de Simone V."/>
            <person name="Obermaier B."/>
            <person name="Mache R."/>
            <person name="Mueller M."/>
            <person name="Kreis M."/>
            <person name="Delseny M."/>
            <person name="Puigdomenech P."/>
            <person name="Watson M."/>
            <person name="Schmidtheini T."/>
            <person name="Reichert B."/>
            <person name="Portetelle D."/>
            <person name="Perez-Alonso M."/>
            <person name="Boutry M."/>
            <person name="Bancroft I."/>
            <person name="Vos P."/>
            <person name="Hoheisel J."/>
            <person name="Zimmermann W."/>
            <person name="Wedler H."/>
            <person name="Ridley P."/>
            <person name="Langham S.-A."/>
            <person name="McCullagh B."/>
            <person name="Bilham L."/>
            <person name="Robben J."/>
            <person name="van der Schueren J."/>
            <person name="Grymonprez B."/>
            <person name="Chuang Y.-J."/>
            <person name="Vandenbussche F."/>
            <person name="Braeken M."/>
            <person name="Weltjens I."/>
            <person name="Voet M."/>
            <person name="Bastiaens I."/>
            <person name="Aert R."/>
            <person name="Defoor E."/>
            <person name="Weitzenegger T."/>
            <person name="Bothe G."/>
            <person name="Ramsperger U."/>
            <person name="Hilbert H."/>
            <person name="Braun M."/>
            <person name="Holzer E."/>
            <person name="Brandt A."/>
            <person name="Peters S."/>
            <person name="van Staveren M."/>
            <person name="Dirkse W."/>
            <person name="Mooijman P."/>
            <person name="Klein Lankhorst R."/>
            <person name="Rose M."/>
            <person name="Hauf J."/>
            <person name="Koetter P."/>
            <person name="Berneiser S."/>
            <person name="Hempel S."/>
            <person name="Feldpausch M."/>
            <person name="Lamberth S."/>
            <person name="Van den Daele H."/>
            <person name="De Keyser A."/>
            <person name="Buysshaert C."/>
            <person name="Gielen J."/>
            <person name="Villarroel R."/>
            <person name="De Clercq R."/>
            <person name="van Montagu M."/>
            <person name="Rogers J."/>
            <person name="Cronin A."/>
            <person name="Quail M.A."/>
            <person name="Bray-Allen S."/>
            <person name="Clark L."/>
            <person name="Doggett J."/>
            <person name="Hall S."/>
            <person name="Kay M."/>
            <person name="Lennard N."/>
            <person name="McLay K."/>
            <person name="Mayes R."/>
            <person name="Pettett A."/>
            <person name="Rajandream M.A."/>
            <person name="Lyne M."/>
            <person name="Benes V."/>
            <person name="Rechmann S."/>
            <person name="Borkova D."/>
            <person name="Bloecker H."/>
            <person name="Scharfe M."/>
            <person name="Grimm M."/>
            <person name="Loehnert T.-H."/>
            <person name="Dose S."/>
            <person name="de Haan M."/>
            <person name="Maarse A.C."/>
            <person name="Schaefer M."/>
            <person name="Mueller-Auer S."/>
            <person name="Gabel C."/>
            <person name="Fuchs M."/>
            <person name="Fartmann B."/>
            <person name="Granderath K."/>
            <person name="Dauner D."/>
            <person name="Herzl A."/>
            <person name="Neumann S."/>
            <person name="Argiriou A."/>
            <person name="Vitale D."/>
            <person name="Liguori R."/>
            <person name="Piravandi E."/>
            <person name="Massenet O."/>
            <person name="Quigley F."/>
            <person name="Clabauld G."/>
            <person name="Muendlein A."/>
            <person name="Felber R."/>
            <person name="Schnabl S."/>
            <person name="Hiller R."/>
            <person name="Schmidt W."/>
            <person name="Lecharny A."/>
            <person name="Aubourg S."/>
            <person name="Chefdor F."/>
            <person name="Cooke R."/>
            <person name="Berger C."/>
            <person name="Monfort A."/>
            <person name="Casacuberta E."/>
            <person name="Gibbons T."/>
            <person name="Weber N."/>
            <person name="Vandenbol M."/>
            <person name="Bargues M."/>
            <person name="Terol J."/>
            <person name="Torres A."/>
            <person name="Perez-Perez A."/>
            <person name="Purnelle B."/>
            <person name="Bent E."/>
            <person name="Johnson S."/>
            <person name="Tacon D."/>
            <person name="Jesse T."/>
            <person name="Heijnen L."/>
            <person name="Schwarz S."/>
            <person name="Scholler P."/>
            <person name="Heber S."/>
            <person name="Francs P."/>
            <person name="Bielke C."/>
            <person name="Frishman D."/>
            <person name="Haase D."/>
            <person name="Lemcke K."/>
            <person name="Mewes H.-W."/>
            <person name="Stocker S."/>
            <person name="Zaccaria P."/>
            <person name="Bevan M."/>
            <person name="Wilson R.K."/>
            <person name="de la Bastide M."/>
            <person name="Habermann K."/>
            <person name="Parnell L."/>
            <person name="Dedhia N."/>
            <person name="Gnoj L."/>
            <person name="Schutz K."/>
            <person name="Huang E."/>
            <person name="Spiegel L."/>
            <person name="Sekhon M."/>
            <person name="Murray J."/>
            <person name="Sheet P."/>
            <person name="Cordes M."/>
            <person name="Abu-Threideh J."/>
            <person name="Stoneking T."/>
            <person name="Kalicki J."/>
            <person name="Graves T."/>
            <person name="Harmon G."/>
            <person name="Edwards J."/>
            <person name="Latreille P."/>
            <person name="Courtney L."/>
            <person name="Cloud J."/>
            <person name="Abbott A."/>
            <person name="Scott K."/>
            <person name="Johnson D."/>
            <person name="Minx P."/>
            <person name="Bentley D."/>
            <person name="Fulton B."/>
            <person name="Miller N."/>
            <person name="Greco T."/>
            <person name="Kemp K."/>
            <person name="Kramer J."/>
            <person name="Fulton L."/>
            <person name="Mardis E."/>
            <person name="Dante M."/>
            <person name="Pepin K."/>
            <person name="Hillier L.W."/>
            <person name="Nelson J."/>
            <person name="Spieth J."/>
            <person name="Ryan E."/>
            <person name="Andrews S."/>
            <person name="Geisel C."/>
            <person name="Layman D."/>
            <person name="Du H."/>
            <person name="Ali J."/>
            <person name="Berghoff A."/>
            <person name="Jones K."/>
            <person name="Drone K."/>
            <person name="Cotton M."/>
            <person name="Joshu C."/>
            <person name="Antonoiu B."/>
            <person name="Zidanic M."/>
            <person name="Strong C."/>
            <person name="Sun H."/>
            <person name="Lamar B."/>
            <person name="Yordan C."/>
            <person name="Ma P."/>
            <person name="Zhong J."/>
            <person name="Preston R."/>
            <person name="Vil D."/>
            <person name="Shekher M."/>
            <person name="Matero A."/>
            <person name="Shah R."/>
            <person name="Swaby I.K."/>
            <person name="O'Shaughnessy A."/>
            <person name="Rodriguez M."/>
            <person name="Hoffman J."/>
            <person name="Till S."/>
            <person name="Granat S."/>
            <person name="Shohdy N."/>
            <person name="Hasegawa A."/>
            <person name="Hameed A."/>
            <person name="Lodhi M."/>
            <person name="Johnson A."/>
            <person name="Chen E."/>
            <person name="Marra M.A."/>
            <person name="Martienssen R."/>
            <person name="McCombie W.R."/>
        </authorList>
    </citation>
    <scope>NUCLEOTIDE SEQUENCE [LARGE SCALE GENOMIC DNA]</scope>
    <source>
        <strain>cv. Columbia</strain>
    </source>
</reference>
<reference key="3">
    <citation type="journal article" date="2017" name="Plant J.">
        <title>Araport11: a complete reannotation of the Arabidopsis thaliana reference genome.</title>
        <authorList>
            <person name="Cheng C.Y."/>
            <person name="Krishnakumar V."/>
            <person name="Chan A.P."/>
            <person name="Thibaud-Nissen F."/>
            <person name="Schobel S."/>
            <person name="Town C.D."/>
        </authorList>
    </citation>
    <scope>GENOME REANNOTATION</scope>
    <source>
        <strain>cv. Columbia</strain>
    </source>
</reference>
<reference key="4">
    <citation type="journal article" date="2002" name="Science">
        <title>Functional annotation of a full-length Arabidopsis cDNA collection.</title>
        <authorList>
            <person name="Seki M."/>
            <person name="Narusaka M."/>
            <person name="Kamiya A."/>
            <person name="Ishida J."/>
            <person name="Satou M."/>
            <person name="Sakurai T."/>
            <person name="Nakajima M."/>
            <person name="Enju A."/>
            <person name="Akiyama K."/>
            <person name="Oono Y."/>
            <person name="Muramatsu M."/>
            <person name="Hayashizaki Y."/>
            <person name="Kawai J."/>
            <person name="Carninci P."/>
            <person name="Itoh M."/>
            <person name="Ishii Y."/>
            <person name="Arakawa T."/>
            <person name="Shibata K."/>
            <person name="Shinagawa A."/>
            <person name="Shinozaki K."/>
        </authorList>
    </citation>
    <scope>NUCLEOTIDE SEQUENCE [LARGE SCALE MRNA]</scope>
    <source>
        <strain>cv. Columbia</strain>
    </source>
</reference>
<reference key="5">
    <citation type="journal article" date="2003" name="Science">
        <title>Empirical analysis of transcriptional activity in the Arabidopsis genome.</title>
        <authorList>
            <person name="Yamada K."/>
            <person name="Lim J."/>
            <person name="Dale J.M."/>
            <person name="Chen H."/>
            <person name="Shinn P."/>
            <person name="Palm C.J."/>
            <person name="Southwick A.M."/>
            <person name="Wu H.C."/>
            <person name="Kim C.J."/>
            <person name="Nguyen M."/>
            <person name="Pham P.K."/>
            <person name="Cheuk R.F."/>
            <person name="Karlin-Newmann G."/>
            <person name="Liu S.X."/>
            <person name="Lam B."/>
            <person name="Sakano H."/>
            <person name="Wu T."/>
            <person name="Yu G."/>
            <person name="Miranda M."/>
            <person name="Quach H.L."/>
            <person name="Tripp M."/>
            <person name="Chang C.H."/>
            <person name="Lee J.M."/>
            <person name="Toriumi M.J."/>
            <person name="Chan M.M."/>
            <person name="Tang C.C."/>
            <person name="Onodera C.S."/>
            <person name="Deng J.M."/>
            <person name="Akiyama K."/>
            <person name="Ansari Y."/>
            <person name="Arakawa T."/>
            <person name="Banh J."/>
            <person name="Banno F."/>
            <person name="Bowser L."/>
            <person name="Brooks S.Y."/>
            <person name="Carninci P."/>
            <person name="Chao Q."/>
            <person name="Choy N."/>
            <person name="Enju A."/>
            <person name="Goldsmith A.D."/>
            <person name="Gurjal M."/>
            <person name="Hansen N.F."/>
            <person name="Hayashizaki Y."/>
            <person name="Johnson-Hopson C."/>
            <person name="Hsuan V.W."/>
            <person name="Iida K."/>
            <person name="Karnes M."/>
            <person name="Khan S."/>
            <person name="Koesema E."/>
            <person name="Ishida J."/>
            <person name="Jiang P.X."/>
            <person name="Jones T."/>
            <person name="Kawai J."/>
            <person name="Kamiya A."/>
            <person name="Meyers C."/>
            <person name="Nakajima M."/>
            <person name="Narusaka M."/>
            <person name="Seki M."/>
            <person name="Sakurai T."/>
            <person name="Satou M."/>
            <person name="Tamse R."/>
            <person name="Vaysberg M."/>
            <person name="Wallender E.K."/>
            <person name="Wong C."/>
            <person name="Yamamura Y."/>
            <person name="Yuan S."/>
            <person name="Shinozaki K."/>
            <person name="Davis R.W."/>
            <person name="Theologis A."/>
            <person name="Ecker J.R."/>
        </authorList>
    </citation>
    <scope>NUCLEOTIDE SEQUENCE [LARGE SCALE MRNA]</scope>
    <source>
        <strain>cv. Columbia</strain>
    </source>
</reference>
<reference key="6">
    <citation type="submission" date="2002-03" db="EMBL/GenBank/DDBJ databases">
        <title>Full-length cDNA from Arabidopsis thaliana.</title>
        <authorList>
            <person name="Brover V.V."/>
            <person name="Troukhan M.E."/>
            <person name="Alexandrov N.A."/>
            <person name="Lu Y.-P."/>
            <person name="Flavell R.B."/>
            <person name="Feldmann K.A."/>
        </authorList>
    </citation>
    <scope>NUCLEOTIDE SEQUENCE [LARGE SCALE MRNA]</scope>
</reference>
<reference key="7">
    <citation type="journal article" date="2001" name="Plant Physiol.">
        <title>Chloroplast and mitochondrial proteases in Arabidopsis. A proposed nomenclature.</title>
        <authorList>
            <person name="Adam Z."/>
            <person name="Adamska I."/>
            <person name="Nakabayashi K."/>
            <person name="Ostersetzer O."/>
            <person name="Haussuhl K."/>
            <person name="Manuell A."/>
            <person name="Zheng B."/>
            <person name="Vallon O."/>
            <person name="Rodermel S.R."/>
            <person name="Shinozaki K."/>
            <person name="Clarke A.K."/>
        </authorList>
    </citation>
    <scope>GENE FAMILY</scope>
    <scope>NOMENCLATURE</scope>
</reference>
<reference key="8">
    <citation type="journal article" date="2004" name="J. Biol. Chem.">
        <title>Clp protease complexes from photosynthetic and non-photosynthetic plastids and mitochondria of plants, their predicted three-dimensional structures, and functional implications.</title>
        <authorList>
            <person name="Peltier J.-B."/>
            <person name="Ripoll D.R."/>
            <person name="Friso G."/>
            <person name="Rudella A."/>
            <person name="Cai Y."/>
            <person name="Ytterberg J."/>
            <person name="Giacomelli L."/>
            <person name="Pillardy J."/>
            <person name="van Wijk K.J."/>
        </authorList>
    </citation>
    <scope>IDENTIFICATION BY MASS SPECTROMETRY</scope>
    <scope>SUBUNIT</scope>
    <scope>SUBCELLULAR LOCATION</scope>
    <scope>3D-STRUCTURE MODELING</scope>
</reference>
<reference key="9">
    <citation type="journal article" date="2005" name="Physiol. Plantarum">
        <title>The ATP-dependent Clp protease in chloroplasts of higher plants.</title>
        <authorList>
            <person name="Clarke A.K."/>
            <person name="MacDonald T.M."/>
            <person name="Sjoegren L.L."/>
        </authorList>
    </citation>
    <scope>NOMENCLATURE</scope>
    <scope>DISRUPTION PHENOTYPE</scope>
</reference>
<reference key="10">
    <citation type="journal article" date="2006" name="Plant Cell">
        <title>Downregulation of ClpR2 leads to reduced accumulation of the ClpPRS protease complex and defects in chloroplast biogenesis in Arabidopsis.</title>
        <authorList>
            <person name="Rudella A."/>
            <person name="Friso G."/>
            <person name="Alonso J.M."/>
            <person name="Ecker J.R."/>
            <person name="van Wijk K.J."/>
        </authorList>
    </citation>
    <scope>IDENTIFICATION BY MASS SPECTROMETRY</scope>
    <scope>SUBUNIT</scope>
</reference>
<reference key="11">
    <citation type="journal article" date="2006" name="Plant Cell">
        <title>Structural and functional insights into the chloroplast ATP-dependent Clp protease in Arabidopsis.</title>
        <authorList>
            <person name="Sjoegren L.L.E."/>
            <person name="Stanne T.M."/>
            <person name="Zheng B."/>
            <person name="Sutinen S."/>
            <person name="Clarke A.K."/>
        </authorList>
    </citation>
    <scope>SUBUNIT</scope>
</reference>
<reference key="12">
    <citation type="journal article" date="2009" name="Plant Cell">
        <title>Subunits of the plastid ClpPR protease complex have differential contributions to embryogenesis, plastid biogenesis, and plant development in Arabidopsis.</title>
        <authorList>
            <person name="Kim J."/>
            <person name="Rudella A."/>
            <person name="Ramirez Rodriguez V."/>
            <person name="Zybailov B."/>
            <person name="Olinares P.D."/>
            <person name="van Wijk K.J."/>
        </authorList>
    </citation>
    <scope>DISRUPTION PHENOTYPE</scope>
</reference>
<reference key="13">
    <citation type="journal article" date="2011" name="Plant Cell">
        <title>Subunit stoichiometry, evolution, and functional implications of an asymmetric plant plastid ClpP/R protease complex in Arabidopsis.</title>
        <authorList>
            <person name="Olinares P.D."/>
            <person name="Kim J."/>
            <person name="Davis J.I."/>
            <person name="van Wijk K.J."/>
        </authorList>
    </citation>
    <scope>IDENTIFICATION BY MASS SPECTROMETRY</scope>
    <scope>SUBUNIT</scope>
</reference>
<reference key="14">
    <citation type="journal article" date="2011" name="Plant J.">
        <title>'happy on norflurazon' (hon) mutations implicate perturbance of plastid homeostasis with activating stress acclimatization and changing nuclear gene expression in norflurazon-treated seedlings.</title>
        <authorList>
            <person name="Saini G."/>
            <person name="Meskauskiene R."/>
            <person name="Pijacka W."/>
            <person name="Roszak P."/>
            <person name="Sjoegren L.L."/>
            <person name="Clarke A.K."/>
            <person name="Straus M."/>
            <person name="Apel K."/>
        </authorList>
    </citation>
    <scope>FUNCTION</scope>
</reference>
<reference key="15">
    <citation type="journal article" date="2012" name="Physiol. Plantarum">
        <title>The chloroplast ATP-dependent Clp protease in vascular plants - new dimensions and future challenges.</title>
        <authorList>
            <person name="Clarke A.K."/>
        </authorList>
    </citation>
    <scope>REVIEW</scope>
</reference>
<organism>
    <name type="scientific">Arabidopsis thaliana</name>
    <name type="common">Mouse-ear cress</name>
    <dbReference type="NCBI Taxonomy" id="3702"/>
    <lineage>
        <taxon>Eukaryota</taxon>
        <taxon>Viridiplantae</taxon>
        <taxon>Streptophyta</taxon>
        <taxon>Embryophyta</taxon>
        <taxon>Tracheophyta</taxon>
        <taxon>Spermatophyta</taxon>
        <taxon>Magnoliopsida</taxon>
        <taxon>eudicotyledons</taxon>
        <taxon>Gunneridae</taxon>
        <taxon>Pentapetalae</taxon>
        <taxon>rosids</taxon>
        <taxon>malvids</taxon>
        <taxon>Brassicales</taxon>
        <taxon>Brassicaceae</taxon>
        <taxon>Camelineae</taxon>
        <taxon>Arabidopsis</taxon>
    </lineage>
</organism>
<name>CLPR4_ARATH</name>
<sequence length="305" mass="33440">MEVAAATATSFTTLRARTSAIIPSSTRNLRSKPRFSSSSSLRASLSNGFLSPYTGGSISSDLCGAKLRAESLNPLNFSSSKPKRGVVTMVIPFSKGSAHEQPPPDLASYLFKNRIVYLGMSLVPSVTELILAEFLYLQYEDEEKPIYLYINSTGTTKNGEKLGYDTEAFAIYDVMGYVKPPIFTLCVGNAWGEAALLLTAGAKGNRSALPSSTIMIKQPIARFQGQATDVEIARKEIKHIKTEMVKLYSKHIGKSPEQIEADMKRPKYFSPTEAVEYGIIDKVVYNERGSQDRGVVSDLKKAQLI</sequence>